<organism>
    <name type="scientific">Malacoplasma penetrans (strain HF-2)</name>
    <name type="common">Mycoplasma penetrans</name>
    <dbReference type="NCBI Taxonomy" id="272633"/>
    <lineage>
        <taxon>Bacteria</taxon>
        <taxon>Bacillati</taxon>
        <taxon>Mycoplasmatota</taxon>
        <taxon>Mycoplasmoidales</taxon>
        <taxon>Mycoplasmoidaceae</taxon>
        <taxon>Malacoplasma</taxon>
    </lineage>
</organism>
<gene>
    <name evidence="1" type="primary">rplQ</name>
    <name type="ordered locus">MYPE9910</name>
</gene>
<comment type="subunit">
    <text evidence="1">Part of the 50S ribosomal subunit. Contacts protein L32.</text>
</comment>
<comment type="similarity">
    <text evidence="1">Belongs to the bacterial ribosomal protein bL17 family.</text>
</comment>
<reference key="1">
    <citation type="journal article" date="2002" name="Nucleic Acids Res.">
        <title>The complete genomic sequence of Mycoplasma penetrans, an intracellular bacterial pathogen in humans.</title>
        <authorList>
            <person name="Sasaki Y."/>
            <person name="Ishikawa J."/>
            <person name="Yamashita A."/>
            <person name="Oshima K."/>
            <person name="Kenri T."/>
            <person name="Furuya K."/>
            <person name="Yoshino C."/>
            <person name="Horino A."/>
            <person name="Shiba T."/>
            <person name="Sasaki T."/>
            <person name="Hattori M."/>
        </authorList>
    </citation>
    <scope>NUCLEOTIDE SEQUENCE [LARGE SCALE GENOMIC DNA]</scope>
    <source>
        <strain>HF-2</strain>
    </source>
</reference>
<dbReference type="EMBL" id="BA000026">
    <property type="protein sequence ID" value="BAC44777.1"/>
    <property type="molecule type" value="Genomic_DNA"/>
</dbReference>
<dbReference type="RefSeq" id="WP_011077805.1">
    <property type="nucleotide sequence ID" value="NC_004432.1"/>
</dbReference>
<dbReference type="SMR" id="Q8EUD8"/>
<dbReference type="FunCoup" id="Q8EUD8">
    <property type="interactions" value="236"/>
</dbReference>
<dbReference type="STRING" id="272633.gene:10732111"/>
<dbReference type="KEGG" id="mpe:MYPE9910"/>
<dbReference type="eggNOG" id="COG0203">
    <property type="taxonomic scope" value="Bacteria"/>
</dbReference>
<dbReference type="HOGENOM" id="CLU_074407_2_2_14"/>
<dbReference type="InParanoid" id="Q8EUD8"/>
<dbReference type="Proteomes" id="UP000002522">
    <property type="component" value="Chromosome"/>
</dbReference>
<dbReference type="GO" id="GO:0022625">
    <property type="term" value="C:cytosolic large ribosomal subunit"/>
    <property type="evidence" value="ECO:0007669"/>
    <property type="project" value="TreeGrafter"/>
</dbReference>
<dbReference type="GO" id="GO:0003735">
    <property type="term" value="F:structural constituent of ribosome"/>
    <property type="evidence" value="ECO:0007669"/>
    <property type="project" value="InterPro"/>
</dbReference>
<dbReference type="GO" id="GO:0006412">
    <property type="term" value="P:translation"/>
    <property type="evidence" value="ECO:0007669"/>
    <property type="project" value="UniProtKB-UniRule"/>
</dbReference>
<dbReference type="Gene3D" id="3.90.1030.10">
    <property type="entry name" value="Ribosomal protein L17"/>
    <property type="match status" value="1"/>
</dbReference>
<dbReference type="HAMAP" id="MF_01368">
    <property type="entry name" value="Ribosomal_bL17"/>
    <property type="match status" value="1"/>
</dbReference>
<dbReference type="InterPro" id="IPR000456">
    <property type="entry name" value="Ribosomal_bL17"/>
</dbReference>
<dbReference type="InterPro" id="IPR047859">
    <property type="entry name" value="Ribosomal_bL17_CS"/>
</dbReference>
<dbReference type="InterPro" id="IPR036373">
    <property type="entry name" value="Ribosomal_bL17_sf"/>
</dbReference>
<dbReference type="NCBIfam" id="TIGR00059">
    <property type="entry name" value="L17"/>
    <property type="match status" value="1"/>
</dbReference>
<dbReference type="PANTHER" id="PTHR14413:SF16">
    <property type="entry name" value="LARGE RIBOSOMAL SUBUNIT PROTEIN BL17M"/>
    <property type="match status" value="1"/>
</dbReference>
<dbReference type="PANTHER" id="PTHR14413">
    <property type="entry name" value="RIBOSOMAL PROTEIN L17"/>
    <property type="match status" value="1"/>
</dbReference>
<dbReference type="Pfam" id="PF01196">
    <property type="entry name" value="Ribosomal_L17"/>
    <property type="match status" value="1"/>
</dbReference>
<dbReference type="SUPFAM" id="SSF64263">
    <property type="entry name" value="Prokaryotic ribosomal protein L17"/>
    <property type="match status" value="1"/>
</dbReference>
<dbReference type="PROSITE" id="PS01167">
    <property type="entry name" value="RIBOSOMAL_L17"/>
    <property type="match status" value="1"/>
</dbReference>
<protein>
    <recommendedName>
        <fullName evidence="1">Large ribosomal subunit protein bL17</fullName>
    </recommendedName>
    <alternativeName>
        <fullName evidence="2">50S ribosomal protein L17</fullName>
    </alternativeName>
</protein>
<sequence length="119" mass="13531">MSYINKKGKTTSWRLMVIRQQVSEVIANNQITTTLTKAKETRKHVDRIITLAKKNTLASRRAAAAILLDTSISTKDQLIQKLFTDLQKKYTSRNGGYTRILKLGRRKGDNVEEAILQLV</sequence>
<proteinExistence type="inferred from homology"/>
<evidence type="ECO:0000255" key="1">
    <source>
        <dbReference type="HAMAP-Rule" id="MF_01368"/>
    </source>
</evidence>
<evidence type="ECO:0000305" key="2"/>
<feature type="chain" id="PRO_1000055879" description="Large ribosomal subunit protein bL17">
    <location>
        <begin position="1"/>
        <end position="119"/>
    </location>
</feature>
<accession>Q8EUD8</accession>
<keyword id="KW-1185">Reference proteome</keyword>
<keyword id="KW-0687">Ribonucleoprotein</keyword>
<keyword id="KW-0689">Ribosomal protein</keyword>
<name>RL17_MALP2</name>